<comment type="function">
    <text evidence="1">GTPase that associates with the 50S ribosomal subunit and may have a role during protein synthesis or ribosome biogenesis.</text>
</comment>
<comment type="cofactor">
    <cofactor evidence="1">
        <name>Mg(2+)</name>
        <dbReference type="ChEBI" id="CHEBI:18420"/>
    </cofactor>
</comment>
<comment type="subunit">
    <text evidence="1">Monomer. Associates with the 50S ribosomal subunit.</text>
</comment>
<comment type="subcellular location">
    <subcellularLocation>
        <location evidence="1">Cytoplasm</location>
    </subcellularLocation>
    <text evidence="1">May associate with membranes.</text>
</comment>
<comment type="similarity">
    <text evidence="1">Belongs to the TRAFAC class OBG-HflX-like GTPase superfamily. HflX GTPase family.</text>
</comment>
<sequence length="391" mass="43571">MYITDNETKKALLIFTDIFSGPASNSHISRSTLQEKSAKALKEIEEKELKSLVETIFLKPLSSLRFRIAKENPATLVGSGQLEKIAQAIEEEGADLVVFNSAVSPRIQRNLEAALNTCVIDRSEVIIQIFADRAQTREAVLQAELARLEYSMPRLTRRWTSLAQQRGGAKGTRGASRGAGEKKLELDRRRLKTEITKLKKEVERVRLQRSEQRKTRLNGDKKIGAIVGYTNAGKSSLLKKLSGAEVFTEDKLFATLDAETRKVFLQTGEKNIQILLTDTVGFVSNLPHQLIDAFRSTLEEAALADFLIIVCDAAHPAMPECLEVTKKVLDELSCSDKPSIIAINKMDDIFDEAQLLNLKERYPEAVEISVTTGQGLEGLKKKITDIIIFDK</sequence>
<evidence type="ECO:0000255" key="1">
    <source>
        <dbReference type="HAMAP-Rule" id="MF_00900"/>
    </source>
</evidence>
<evidence type="ECO:0000256" key="2">
    <source>
        <dbReference type="SAM" id="MobiDB-lite"/>
    </source>
</evidence>
<gene>
    <name evidence="1" type="primary">hflX</name>
    <name type="ordered locus">TDE_2750</name>
</gene>
<dbReference type="EMBL" id="AE017226">
    <property type="protein sequence ID" value="AAS13267.1"/>
    <property type="molecule type" value="Genomic_DNA"/>
</dbReference>
<dbReference type="RefSeq" id="NP_973348.1">
    <property type="nucleotide sequence ID" value="NC_002967.9"/>
</dbReference>
<dbReference type="RefSeq" id="WP_002667011.1">
    <property type="nucleotide sequence ID" value="NC_002967.9"/>
</dbReference>
<dbReference type="SMR" id="Q73J26"/>
<dbReference type="STRING" id="243275.TDE_2750"/>
<dbReference type="PaxDb" id="243275-TDE_2750"/>
<dbReference type="GeneID" id="2740717"/>
<dbReference type="KEGG" id="tde:TDE_2750"/>
<dbReference type="PATRIC" id="fig|243275.7.peg.2596"/>
<dbReference type="eggNOG" id="COG2262">
    <property type="taxonomic scope" value="Bacteria"/>
</dbReference>
<dbReference type="HOGENOM" id="CLU_019597_2_1_12"/>
<dbReference type="OrthoDB" id="9812272at2"/>
<dbReference type="Proteomes" id="UP000008212">
    <property type="component" value="Chromosome"/>
</dbReference>
<dbReference type="GO" id="GO:0005737">
    <property type="term" value="C:cytoplasm"/>
    <property type="evidence" value="ECO:0007669"/>
    <property type="project" value="UniProtKB-SubCell"/>
</dbReference>
<dbReference type="GO" id="GO:0005525">
    <property type="term" value="F:GTP binding"/>
    <property type="evidence" value="ECO:0007669"/>
    <property type="project" value="UniProtKB-UniRule"/>
</dbReference>
<dbReference type="GO" id="GO:0003924">
    <property type="term" value="F:GTPase activity"/>
    <property type="evidence" value="ECO:0007669"/>
    <property type="project" value="UniProtKB-UniRule"/>
</dbReference>
<dbReference type="GO" id="GO:0046872">
    <property type="term" value="F:metal ion binding"/>
    <property type="evidence" value="ECO:0007669"/>
    <property type="project" value="UniProtKB-KW"/>
</dbReference>
<dbReference type="GO" id="GO:0043022">
    <property type="term" value="F:ribosome binding"/>
    <property type="evidence" value="ECO:0007669"/>
    <property type="project" value="TreeGrafter"/>
</dbReference>
<dbReference type="CDD" id="cd01878">
    <property type="entry name" value="HflX"/>
    <property type="match status" value="1"/>
</dbReference>
<dbReference type="Gene3D" id="6.10.250.2860">
    <property type="match status" value="1"/>
</dbReference>
<dbReference type="Gene3D" id="3.40.50.11060">
    <property type="entry name" value="GTPase HflX, N-terminal domain"/>
    <property type="match status" value="1"/>
</dbReference>
<dbReference type="Gene3D" id="3.40.50.300">
    <property type="entry name" value="P-loop containing nucleotide triphosphate hydrolases"/>
    <property type="match status" value="1"/>
</dbReference>
<dbReference type="HAMAP" id="MF_00900">
    <property type="entry name" value="GTPase_HflX"/>
    <property type="match status" value="1"/>
</dbReference>
<dbReference type="InterPro" id="IPR030394">
    <property type="entry name" value="G_HFLX_dom"/>
</dbReference>
<dbReference type="InterPro" id="IPR006073">
    <property type="entry name" value="GTP-bd"/>
</dbReference>
<dbReference type="InterPro" id="IPR032305">
    <property type="entry name" value="GTP-bd_M"/>
</dbReference>
<dbReference type="InterPro" id="IPR016496">
    <property type="entry name" value="GTPase_HflX"/>
</dbReference>
<dbReference type="InterPro" id="IPR025121">
    <property type="entry name" value="GTPase_HflX_N"/>
</dbReference>
<dbReference type="InterPro" id="IPR042108">
    <property type="entry name" value="GTPase_HflX_N_sf"/>
</dbReference>
<dbReference type="InterPro" id="IPR027417">
    <property type="entry name" value="P-loop_NTPase"/>
</dbReference>
<dbReference type="InterPro" id="IPR005225">
    <property type="entry name" value="Small_GTP-bd"/>
</dbReference>
<dbReference type="NCBIfam" id="TIGR03156">
    <property type="entry name" value="GTP_HflX"/>
    <property type="match status" value="1"/>
</dbReference>
<dbReference type="NCBIfam" id="TIGR00231">
    <property type="entry name" value="small_GTP"/>
    <property type="match status" value="1"/>
</dbReference>
<dbReference type="PANTHER" id="PTHR10229:SF0">
    <property type="entry name" value="GTP-BINDING PROTEIN 6-RELATED"/>
    <property type="match status" value="1"/>
</dbReference>
<dbReference type="PANTHER" id="PTHR10229">
    <property type="entry name" value="GTP-BINDING PROTEIN HFLX"/>
    <property type="match status" value="1"/>
</dbReference>
<dbReference type="Pfam" id="PF16360">
    <property type="entry name" value="GTP-bdg_M"/>
    <property type="match status" value="1"/>
</dbReference>
<dbReference type="Pfam" id="PF13167">
    <property type="entry name" value="GTP-bdg_N"/>
    <property type="match status" value="1"/>
</dbReference>
<dbReference type="Pfam" id="PF01926">
    <property type="entry name" value="MMR_HSR1"/>
    <property type="match status" value="1"/>
</dbReference>
<dbReference type="PIRSF" id="PIRSF006809">
    <property type="entry name" value="GTP-binding_hflX_prd"/>
    <property type="match status" value="1"/>
</dbReference>
<dbReference type="SUPFAM" id="SSF52540">
    <property type="entry name" value="P-loop containing nucleoside triphosphate hydrolases"/>
    <property type="match status" value="1"/>
</dbReference>
<dbReference type="PROSITE" id="PS51705">
    <property type="entry name" value="G_HFLX"/>
    <property type="match status" value="1"/>
</dbReference>
<protein>
    <recommendedName>
        <fullName evidence="1">GTPase HflX</fullName>
    </recommendedName>
    <alternativeName>
        <fullName evidence="1">GTP-binding protein HflX</fullName>
    </alternativeName>
</protein>
<organism>
    <name type="scientific">Treponema denticola (strain ATCC 35405 / DSM 14222 / CIP 103919 / JCM 8153 / KCTC 15104)</name>
    <dbReference type="NCBI Taxonomy" id="243275"/>
    <lineage>
        <taxon>Bacteria</taxon>
        <taxon>Pseudomonadati</taxon>
        <taxon>Spirochaetota</taxon>
        <taxon>Spirochaetia</taxon>
        <taxon>Spirochaetales</taxon>
        <taxon>Treponemataceae</taxon>
        <taxon>Treponema</taxon>
    </lineage>
</organism>
<reference key="1">
    <citation type="journal article" date="2004" name="Proc. Natl. Acad. Sci. U.S.A.">
        <title>Comparison of the genome of the oral pathogen Treponema denticola with other spirochete genomes.</title>
        <authorList>
            <person name="Seshadri R."/>
            <person name="Myers G.S.A."/>
            <person name="Tettelin H."/>
            <person name="Eisen J.A."/>
            <person name="Heidelberg J.F."/>
            <person name="Dodson R.J."/>
            <person name="Davidsen T.M."/>
            <person name="DeBoy R.T."/>
            <person name="Fouts D.E."/>
            <person name="Haft D.H."/>
            <person name="Selengut J."/>
            <person name="Ren Q."/>
            <person name="Brinkac L.M."/>
            <person name="Madupu R."/>
            <person name="Kolonay J.F."/>
            <person name="Durkin S.A."/>
            <person name="Daugherty S.C."/>
            <person name="Shetty J."/>
            <person name="Shvartsbeyn A."/>
            <person name="Gebregeorgis E."/>
            <person name="Geer K."/>
            <person name="Tsegaye G."/>
            <person name="Malek J.A."/>
            <person name="Ayodeji B."/>
            <person name="Shatsman S."/>
            <person name="McLeod M.P."/>
            <person name="Smajs D."/>
            <person name="Howell J.K."/>
            <person name="Pal S."/>
            <person name="Amin A."/>
            <person name="Vashisth P."/>
            <person name="McNeill T.Z."/>
            <person name="Xiang Q."/>
            <person name="Sodergren E."/>
            <person name="Baca E."/>
            <person name="Weinstock G.M."/>
            <person name="Norris S.J."/>
            <person name="Fraser C.M."/>
            <person name="Paulsen I.T."/>
        </authorList>
    </citation>
    <scope>NUCLEOTIDE SEQUENCE [LARGE SCALE GENOMIC DNA]</scope>
    <source>
        <strain>ATCC 35405 / DSM 14222 / CIP 103919 / JCM 8153 / KCTC 15104</strain>
    </source>
</reference>
<proteinExistence type="inferred from homology"/>
<name>HFLX_TREDE</name>
<feature type="chain" id="PRO_0000412664" description="GTPase HflX">
    <location>
        <begin position="1"/>
        <end position="391"/>
    </location>
</feature>
<feature type="domain" description="Hflx-type G" evidence="1">
    <location>
        <begin position="222"/>
        <end position="391"/>
    </location>
</feature>
<feature type="region of interest" description="Disordered" evidence="2">
    <location>
        <begin position="162"/>
        <end position="181"/>
    </location>
</feature>
<feature type="binding site" evidence="1">
    <location>
        <begin position="228"/>
        <end position="235"/>
    </location>
    <ligand>
        <name>GTP</name>
        <dbReference type="ChEBI" id="CHEBI:37565"/>
    </ligand>
</feature>
<feature type="binding site" evidence="1">
    <location>
        <position position="235"/>
    </location>
    <ligand>
        <name>Mg(2+)</name>
        <dbReference type="ChEBI" id="CHEBI:18420"/>
    </ligand>
</feature>
<feature type="binding site" evidence="1">
    <location>
        <begin position="253"/>
        <end position="257"/>
    </location>
    <ligand>
        <name>GTP</name>
        <dbReference type="ChEBI" id="CHEBI:37565"/>
    </ligand>
</feature>
<feature type="binding site" evidence="1">
    <location>
        <position position="255"/>
    </location>
    <ligand>
        <name>Mg(2+)</name>
        <dbReference type="ChEBI" id="CHEBI:18420"/>
    </ligand>
</feature>
<feature type="binding site" evidence="1">
    <location>
        <begin position="278"/>
        <end position="281"/>
    </location>
    <ligand>
        <name>GTP</name>
        <dbReference type="ChEBI" id="CHEBI:37565"/>
    </ligand>
</feature>
<feature type="binding site" evidence="1">
    <location>
        <begin position="344"/>
        <end position="347"/>
    </location>
    <ligand>
        <name>GTP</name>
        <dbReference type="ChEBI" id="CHEBI:37565"/>
    </ligand>
</feature>
<feature type="binding site" evidence="1">
    <location>
        <begin position="369"/>
        <end position="371"/>
    </location>
    <ligand>
        <name>GTP</name>
        <dbReference type="ChEBI" id="CHEBI:37565"/>
    </ligand>
</feature>
<keyword id="KW-0963">Cytoplasm</keyword>
<keyword id="KW-0342">GTP-binding</keyword>
<keyword id="KW-0460">Magnesium</keyword>
<keyword id="KW-0479">Metal-binding</keyword>
<keyword id="KW-0547">Nucleotide-binding</keyword>
<keyword id="KW-1185">Reference proteome</keyword>
<accession>Q73J26</accession>